<evidence type="ECO:0000255" key="1">
    <source>
        <dbReference type="HAMAP-Rule" id="MF_00414"/>
    </source>
</evidence>
<organism>
    <name type="scientific">Pseudomonas entomophila (strain L48)</name>
    <dbReference type="NCBI Taxonomy" id="384676"/>
    <lineage>
        <taxon>Bacteria</taxon>
        <taxon>Pseudomonadati</taxon>
        <taxon>Pseudomonadota</taxon>
        <taxon>Gammaproteobacteria</taxon>
        <taxon>Pseudomonadales</taxon>
        <taxon>Pseudomonadaceae</taxon>
        <taxon>Pseudomonas</taxon>
    </lineage>
</organism>
<protein>
    <recommendedName>
        <fullName evidence="1">Probable protein kinase UbiB</fullName>
        <ecNumber evidence="1">2.7.-.-</ecNumber>
    </recommendedName>
    <alternativeName>
        <fullName evidence="1">Ubiquinone biosynthesis protein UbiB</fullName>
    </alternativeName>
</protein>
<dbReference type="EC" id="2.7.-.-" evidence="1"/>
<dbReference type="EMBL" id="CT573326">
    <property type="protein sequence ID" value="CAK17708.1"/>
    <property type="molecule type" value="Genomic_DNA"/>
</dbReference>
<dbReference type="RefSeq" id="WP_011536068.1">
    <property type="nucleotide sequence ID" value="NC_008027.1"/>
</dbReference>
<dbReference type="SMR" id="Q1I3S8"/>
<dbReference type="STRING" id="384676.PSEEN5075"/>
<dbReference type="GeneID" id="32808013"/>
<dbReference type="KEGG" id="pen:PSEEN5075"/>
<dbReference type="eggNOG" id="COG0661">
    <property type="taxonomic scope" value="Bacteria"/>
</dbReference>
<dbReference type="HOGENOM" id="CLU_006533_0_0_6"/>
<dbReference type="OrthoDB" id="9795390at2"/>
<dbReference type="UniPathway" id="UPA00232"/>
<dbReference type="Proteomes" id="UP000000658">
    <property type="component" value="Chromosome"/>
</dbReference>
<dbReference type="GO" id="GO:0005886">
    <property type="term" value="C:plasma membrane"/>
    <property type="evidence" value="ECO:0007669"/>
    <property type="project" value="UniProtKB-SubCell"/>
</dbReference>
<dbReference type="GO" id="GO:0005524">
    <property type="term" value="F:ATP binding"/>
    <property type="evidence" value="ECO:0007669"/>
    <property type="project" value="UniProtKB-KW"/>
</dbReference>
<dbReference type="GO" id="GO:0004672">
    <property type="term" value="F:protein kinase activity"/>
    <property type="evidence" value="ECO:0007669"/>
    <property type="project" value="UniProtKB-UniRule"/>
</dbReference>
<dbReference type="GO" id="GO:0010795">
    <property type="term" value="P:regulation of ubiquinone biosynthetic process"/>
    <property type="evidence" value="ECO:0007669"/>
    <property type="project" value="UniProtKB-UniRule"/>
</dbReference>
<dbReference type="GO" id="GO:0006744">
    <property type="term" value="P:ubiquinone biosynthetic process"/>
    <property type="evidence" value="ECO:0007669"/>
    <property type="project" value="UniProtKB-UniPathway"/>
</dbReference>
<dbReference type="CDD" id="cd13972">
    <property type="entry name" value="UbiB"/>
    <property type="match status" value="1"/>
</dbReference>
<dbReference type="HAMAP" id="MF_00414">
    <property type="entry name" value="UbiB"/>
    <property type="match status" value="1"/>
</dbReference>
<dbReference type="InterPro" id="IPR004147">
    <property type="entry name" value="ABC1_dom"/>
</dbReference>
<dbReference type="InterPro" id="IPR011009">
    <property type="entry name" value="Kinase-like_dom_sf"/>
</dbReference>
<dbReference type="InterPro" id="IPR010232">
    <property type="entry name" value="UbiB"/>
</dbReference>
<dbReference type="InterPro" id="IPR045308">
    <property type="entry name" value="UbiB_bact"/>
</dbReference>
<dbReference type="InterPro" id="IPR050154">
    <property type="entry name" value="UbiB_kinase"/>
</dbReference>
<dbReference type="NCBIfam" id="NF003404">
    <property type="entry name" value="PRK04750.1"/>
    <property type="match status" value="1"/>
</dbReference>
<dbReference type="NCBIfam" id="TIGR01982">
    <property type="entry name" value="UbiB"/>
    <property type="match status" value="1"/>
</dbReference>
<dbReference type="PANTHER" id="PTHR10566">
    <property type="entry name" value="CHAPERONE-ACTIVITY OF BC1 COMPLEX CABC1 -RELATED"/>
    <property type="match status" value="1"/>
</dbReference>
<dbReference type="PANTHER" id="PTHR10566:SF113">
    <property type="entry name" value="PROTEIN ACTIVITY OF BC1 COMPLEX KINASE 7, CHLOROPLASTIC"/>
    <property type="match status" value="1"/>
</dbReference>
<dbReference type="Pfam" id="PF03109">
    <property type="entry name" value="ABC1"/>
    <property type="match status" value="1"/>
</dbReference>
<dbReference type="SUPFAM" id="SSF56112">
    <property type="entry name" value="Protein kinase-like (PK-like)"/>
    <property type="match status" value="1"/>
</dbReference>
<feature type="chain" id="PRO_1000050049" description="Probable protein kinase UbiB">
    <location>
        <begin position="1"/>
        <end position="537"/>
    </location>
</feature>
<feature type="transmembrane region" description="Helical" evidence="1">
    <location>
        <begin position="24"/>
        <end position="44"/>
    </location>
</feature>
<feature type="transmembrane region" description="Helical" evidence="1">
    <location>
        <begin position="493"/>
        <end position="513"/>
    </location>
</feature>
<feature type="transmembrane region" description="Helical" evidence="1">
    <location>
        <begin position="515"/>
        <end position="535"/>
    </location>
</feature>
<feature type="domain" description="Protein kinase" evidence="1">
    <location>
        <begin position="126"/>
        <end position="494"/>
    </location>
</feature>
<feature type="active site" description="Proton acceptor" evidence="1">
    <location>
        <position position="289"/>
    </location>
</feature>
<feature type="binding site" evidence="1">
    <location>
        <begin position="132"/>
        <end position="140"/>
    </location>
    <ligand>
        <name>ATP</name>
        <dbReference type="ChEBI" id="CHEBI:30616"/>
    </ligand>
</feature>
<feature type="binding site" evidence="1">
    <location>
        <position position="154"/>
    </location>
    <ligand>
        <name>ATP</name>
        <dbReference type="ChEBI" id="CHEBI:30616"/>
    </ligand>
</feature>
<keyword id="KW-0067">ATP-binding</keyword>
<keyword id="KW-0997">Cell inner membrane</keyword>
<keyword id="KW-1003">Cell membrane</keyword>
<keyword id="KW-0418">Kinase</keyword>
<keyword id="KW-0472">Membrane</keyword>
<keyword id="KW-0547">Nucleotide-binding</keyword>
<keyword id="KW-0808">Transferase</keyword>
<keyword id="KW-0812">Transmembrane</keyword>
<keyword id="KW-1133">Transmembrane helix</keyword>
<keyword id="KW-0831">Ubiquinone biosynthesis</keyword>
<proteinExistence type="inferred from homology"/>
<accession>Q1I3S8</accession>
<sequence length="537" mass="61234">MKLLAVRRLLRIQRVVIRYRLDDLLFEQPLLPWWLASLRLLMPWRWLPRKPLALSRGARLRLALQDLGPIFIKFGQLLSTRRDLLPTDIADELMLLQDRVPPFDPQHAVALIEEQLGAKVGEVFSRFDVEPLASASVAQVHAARLKSGEEVVVKVVRPGLKPVIAQDLAWLFLIAKAAERASADARRLHPVEIVGDYEKTIYDELDLLREAANASQLRRNFEGSELMYVPQVYWDLCRPKVLVMERIYGVPVTDMATLADQRTDMKMLAERGVEVFFTQVFRDSFFHADMHPGNIFVSTVKPWSPQYIAIDCGIVGSLTAEDQDYLARNLIAFFKRDYRRVAQLHIDSGWVPAQTKVNEFEAAIRTVCEPIFEKPLKDISFGQVLMRLFQTARRFNMEVQPQLVLLQKTLLNIEGLGRQLYPDLDLWSTAKPFLERWMRERMSPKAVIGNLYNQAEQLPHLADMTRDLLERLSQPHLNDAQLPERRRQGDNWALRLLGAGLLGGGATLAAGAVSLSAPAAWPAWLMLAAGLYLIVRR</sequence>
<comment type="function">
    <text evidence="1">Is probably a protein kinase regulator of UbiI activity which is involved in aerobic coenzyme Q (ubiquinone) biosynthesis.</text>
</comment>
<comment type="pathway">
    <text>Cofactor biosynthesis; ubiquinone biosynthesis [regulation].</text>
</comment>
<comment type="subcellular location">
    <subcellularLocation>
        <location evidence="1">Cell inner membrane</location>
        <topology evidence="1">Multi-pass membrane protein</topology>
    </subcellularLocation>
</comment>
<comment type="similarity">
    <text evidence="1">Belongs to the ABC1 family. UbiB subfamily.</text>
</comment>
<name>UBIB_PSEE4</name>
<gene>
    <name evidence="1" type="primary">ubiB</name>
    <name type="ordered locus">PSEEN5075</name>
</gene>
<reference key="1">
    <citation type="journal article" date="2006" name="Nat. Biotechnol.">
        <title>Complete genome sequence of the entomopathogenic and metabolically versatile soil bacterium Pseudomonas entomophila.</title>
        <authorList>
            <person name="Vodovar N."/>
            <person name="Vallenet D."/>
            <person name="Cruveiller S."/>
            <person name="Rouy Z."/>
            <person name="Barbe V."/>
            <person name="Acosta C."/>
            <person name="Cattolico L."/>
            <person name="Jubin C."/>
            <person name="Lajus A."/>
            <person name="Segurens B."/>
            <person name="Vacherie B."/>
            <person name="Wincker P."/>
            <person name="Weissenbach J."/>
            <person name="Lemaitre B."/>
            <person name="Medigue C."/>
            <person name="Boccard F."/>
        </authorList>
    </citation>
    <scope>NUCLEOTIDE SEQUENCE [LARGE SCALE GENOMIC DNA]</scope>
    <source>
        <strain>L48</strain>
    </source>
</reference>